<name>YCHN_ECOLI</name>
<accession>P0AB52</accession>
<accession>P39164</accession>
<accession>P76021</accession>
<comment type="subunit">
    <text evidence="1">Homohexamer. The hexamer is formed by a dimer of trimers.</text>
</comment>
<comment type="similarity">
    <text evidence="2">To M.jannaschii MJ0989.</text>
</comment>
<proteinExistence type="evidence at protein level"/>
<sequence>MQKIVIVANGAPYGSESLFNSLRLAIALREQESNLDLRLFLMSDAVTAGLRGQKPGEGYNIQQMLEILTAQNVPVKLCKTCTDGRGISTLPLIDGVEIGTLVELAQWTLSADKVLTF</sequence>
<gene>
    <name type="primary">ychN</name>
    <name type="ordered locus">b1219</name>
    <name type="ordered locus">JW1210</name>
</gene>
<protein>
    <recommendedName>
        <fullName>Protein YchN</fullName>
    </recommendedName>
</protein>
<feature type="chain" id="PRO_0000168870" description="Protein YchN">
    <location>
        <begin position="1"/>
        <end position="117"/>
    </location>
</feature>
<feature type="sequence conflict" description="In Ref. 1." evidence="2" ref="1">
    <original>A</original>
    <variation>S</variation>
    <location>
        <position position="8"/>
    </location>
</feature>
<feature type="strand" evidence="3">
    <location>
        <begin position="3"/>
        <end position="8"/>
    </location>
</feature>
<feature type="turn" evidence="3">
    <location>
        <begin position="12"/>
        <end position="14"/>
    </location>
</feature>
<feature type="helix" evidence="3">
    <location>
        <begin position="17"/>
        <end position="31"/>
    </location>
</feature>
<feature type="strand" evidence="3">
    <location>
        <begin position="36"/>
        <end position="41"/>
    </location>
</feature>
<feature type="helix" evidence="3">
    <location>
        <begin position="43"/>
        <end position="49"/>
    </location>
</feature>
<feature type="strand" evidence="3">
    <location>
        <begin position="56"/>
        <end position="58"/>
    </location>
</feature>
<feature type="helix" evidence="3">
    <location>
        <begin position="61"/>
        <end position="70"/>
    </location>
</feature>
<feature type="strand" evidence="3">
    <location>
        <begin position="75"/>
        <end position="78"/>
    </location>
</feature>
<feature type="helix" evidence="3">
    <location>
        <begin position="79"/>
        <end position="84"/>
    </location>
</feature>
<feature type="strand" evidence="3">
    <location>
        <begin position="96"/>
        <end position="99"/>
    </location>
</feature>
<feature type="helix" evidence="3">
    <location>
        <begin position="101"/>
        <end position="107"/>
    </location>
</feature>
<feature type="turn" evidence="3">
    <location>
        <begin position="108"/>
        <end position="110"/>
    </location>
</feature>
<feature type="strand" evidence="3">
    <location>
        <begin position="112"/>
        <end position="116"/>
    </location>
</feature>
<dbReference type="EMBL" id="L28709">
    <property type="status" value="NOT_ANNOTATED_CDS"/>
    <property type="molecule type" value="Genomic_DNA"/>
</dbReference>
<dbReference type="EMBL" id="U00096">
    <property type="protein sequence ID" value="AAC74303.1"/>
    <property type="molecule type" value="Genomic_DNA"/>
</dbReference>
<dbReference type="EMBL" id="AP009048">
    <property type="protein sequence ID" value="BAA36087.1"/>
    <property type="molecule type" value="Genomic_DNA"/>
</dbReference>
<dbReference type="PIR" id="H64868">
    <property type="entry name" value="H64868"/>
</dbReference>
<dbReference type="RefSeq" id="NP_415737.1">
    <property type="nucleotide sequence ID" value="NC_000913.3"/>
</dbReference>
<dbReference type="RefSeq" id="WP_001169669.1">
    <property type="nucleotide sequence ID" value="NZ_STEB01000023.1"/>
</dbReference>
<dbReference type="PDB" id="1JX7">
    <property type="method" value="X-ray"/>
    <property type="resolution" value="2.80 A"/>
    <property type="chains" value="A/B/C/D/E/F=2-117"/>
</dbReference>
<dbReference type="PDBsum" id="1JX7"/>
<dbReference type="SMR" id="P0AB52"/>
<dbReference type="BioGRID" id="4261631">
    <property type="interactions" value="139"/>
</dbReference>
<dbReference type="DIP" id="DIP-48042N"/>
<dbReference type="FunCoup" id="P0AB52">
    <property type="interactions" value="68"/>
</dbReference>
<dbReference type="IntAct" id="P0AB52">
    <property type="interactions" value="1"/>
</dbReference>
<dbReference type="STRING" id="511145.b1219"/>
<dbReference type="jPOST" id="P0AB52"/>
<dbReference type="PaxDb" id="511145-b1219"/>
<dbReference type="EnsemblBacteria" id="AAC74303">
    <property type="protein sequence ID" value="AAC74303"/>
    <property type="gene ID" value="b1219"/>
</dbReference>
<dbReference type="GeneID" id="93775287"/>
<dbReference type="GeneID" id="945794"/>
<dbReference type="KEGG" id="ecj:JW1210"/>
<dbReference type="KEGG" id="eco:b1219"/>
<dbReference type="KEGG" id="ecoc:C3026_07170"/>
<dbReference type="PATRIC" id="fig|511145.12.peg.1270"/>
<dbReference type="EchoBASE" id="EB2304"/>
<dbReference type="eggNOG" id="COG1553">
    <property type="taxonomic scope" value="Bacteria"/>
</dbReference>
<dbReference type="HOGENOM" id="CLU_151801_2_0_6"/>
<dbReference type="InParanoid" id="P0AB52"/>
<dbReference type="OMA" id="GTCMDAR"/>
<dbReference type="OrthoDB" id="9807918at2"/>
<dbReference type="PhylomeDB" id="P0AB52"/>
<dbReference type="BioCyc" id="EcoCyc:EG12404-MONOMER"/>
<dbReference type="EvolutionaryTrace" id="P0AB52"/>
<dbReference type="PRO" id="PR:P0AB52"/>
<dbReference type="Proteomes" id="UP000000625">
    <property type="component" value="Chromosome"/>
</dbReference>
<dbReference type="GO" id="GO:0005829">
    <property type="term" value="C:cytosol"/>
    <property type="evidence" value="ECO:0000314"/>
    <property type="project" value="EcoCyc"/>
</dbReference>
<dbReference type="GO" id="GO:0032991">
    <property type="term" value="C:protein-containing complex"/>
    <property type="evidence" value="ECO:0000314"/>
    <property type="project" value="EcoCyc"/>
</dbReference>
<dbReference type="GO" id="GO:0042802">
    <property type="term" value="F:identical protein binding"/>
    <property type="evidence" value="ECO:0000314"/>
    <property type="project" value="EcoCyc"/>
</dbReference>
<dbReference type="FunFam" id="3.40.1260.10:FF:000003">
    <property type="entry name" value="DsrE/DsrF-like family protein"/>
    <property type="match status" value="1"/>
</dbReference>
<dbReference type="Gene3D" id="3.40.1260.10">
    <property type="entry name" value="DsrEFH-like"/>
    <property type="match status" value="1"/>
</dbReference>
<dbReference type="InterPro" id="IPR027396">
    <property type="entry name" value="DsrEFH-like"/>
</dbReference>
<dbReference type="InterPro" id="IPR003787">
    <property type="entry name" value="Sulphur_relay_DsrE/F-like"/>
</dbReference>
<dbReference type="PANTHER" id="PTHR34874">
    <property type="entry name" value="PROTEIN YCHN"/>
    <property type="match status" value="1"/>
</dbReference>
<dbReference type="PANTHER" id="PTHR34874:SF1">
    <property type="entry name" value="PROTEIN YCHN"/>
    <property type="match status" value="1"/>
</dbReference>
<dbReference type="Pfam" id="PF02635">
    <property type="entry name" value="DsrE"/>
    <property type="match status" value="1"/>
</dbReference>
<dbReference type="SUPFAM" id="SSF75169">
    <property type="entry name" value="DsrEFH-like"/>
    <property type="match status" value="1"/>
</dbReference>
<keyword id="KW-0002">3D-structure</keyword>
<keyword id="KW-1185">Reference proteome</keyword>
<organism>
    <name type="scientific">Escherichia coli (strain K12)</name>
    <dbReference type="NCBI Taxonomy" id="83333"/>
    <lineage>
        <taxon>Bacteria</taxon>
        <taxon>Pseudomonadati</taxon>
        <taxon>Pseudomonadota</taxon>
        <taxon>Gammaproteobacteria</taxon>
        <taxon>Enterobacterales</taxon>
        <taxon>Enterobacteriaceae</taxon>
        <taxon>Escherichia</taxon>
    </lineage>
</organism>
<evidence type="ECO:0000269" key="1">
    <source>
    </source>
</evidence>
<evidence type="ECO:0000305" key="2"/>
<evidence type="ECO:0007829" key="3">
    <source>
        <dbReference type="PDB" id="1JX7"/>
    </source>
</evidence>
<reference key="1">
    <citation type="submission" date="1994-07" db="EMBL/GenBank/DDBJ databases">
        <authorList>
            <person name="Ivey D.M."/>
            <person name="Guffanti A.A."/>
            <person name="Zemsky J."/>
            <person name="Pinner E."/>
            <person name="Karpel R."/>
            <person name="Padan E."/>
            <person name="Schuldiner S."/>
            <person name="Krulwich T.A."/>
        </authorList>
    </citation>
    <scope>NUCLEOTIDE SEQUENCE [GENOMIC DNA]</scope>
    <source>
        <strain>NM8191</strain>
    </source>
</reference>
<reference key="2">
    <citation type="journal article" date="1996" name="DNA Res.">
        <title>A 718-kb DNA sequence of the Escherichia coli K-12 genome corresponding to the 12.7-28.0 min region on the linkage map.</title>
        <authorList>
            <person name="Oshima T."/>
            <person name="Aiba H."/>
            <person name="Baba T."/>
            <person name="Fujita K."/>
            <person name="Hayashi K."/>
            <person name="Honjo A."/>
            <person name="Ikemoto K."/>
            <person name="Inada T."/>
            <person name="Itoh T."/>
            <person name="Kajihara M."/>
            <person name="Kanai K."/>
            <person name="Kashimoto K."/>
            <person name="Kimura S."/>
            <person name="Kitagawa M."/>
            <person name="Makino K."/>
            <person name="Masuda S."/>
            <person name="Miki T."/>
            <person name="Mizobuchi K."/>
            <person name="Mori H."/>
            <person name="Motomura K."/>
            <person name="Nakamura Y."/>
            <person name="Nashimoto H."/>
            <person name="Nishio Y."/>
            <person name="Saito N."/>
            <person name="Sampei G."/>
            <person name="Seki Y."/>
            <person name="Tagami H."/>
            <person name="Takemoto K."/>
            <person name="Wada C."/>
            <person name="Yamamoto Y."/>
            <person name="Yano M."/>
            <person name="Horiuchi T."/>
        </authorList>
    </citation>
    <scope>NUCLEOTIDE SEQUENCE [LARGE SCALE GENOMIC DNA]</scope>
    <source>
        <strain>K12 / W3110 / ATCC 27325 / DSM 5911</strain>
    </source>
</reference>
<reference key="3">
    <citation type="journal article" date="1997" name="Science">
        <title>The complete genome sequence of Escherichia coli K-12.</title>
        <authorList>
            <person name="Blattner F.R."/>
            <person name="Plunkett G. III"/>
            <person name="Bloch C.A."/>
            <person name="Perna N.T."/>
            <person name="Burland V."/>
            <person name="Riley M."/>
            <person name="Collado-Vides J."/>
            <person name="Glasner J.D."/>
            <person name="Rode C.K."/>
            <person name="Mayhew G.F."/>
            <person name="Gregor J."/>
            <person name="Davis N.W."/>
            <person name="Kirkpatrick H.A."/>
            <person name="Goeden M.A."/>
            <person name="Rose D.J."/>
            <person name="Mau B."/>
            <person name="Shao Y."/>
        </authorList>
    </citation>
    <scope>NUCLEOTIDE SEQUENCE [LARGE SCALE GENOMIC DNA]</scope>
    <source>
        <strain>K12 / MG1655 / ATCC 47076</strain>
    </source>
</reference>
<reference key="4">
    <citation type="journal article" date="2006" name="Mol. Syst. Biol.">
        <title>Highly accurate genome sequences of Escherichia coli K-12 strains MG1655 and W3110.</title>
        <authorList>
            <person name="Hayashi K."/>
            <person name="Morooka N."/>
            <person name="Yamamoto Y."/>
            <person name="Fujita K."/>
            <person name="Isono K."/>
            <person name="Choi S."/>
            <person name="Ohtsubo E."/>
            <person name="Baba T."/>
            <person name="Wanner B.L."/>
            <person name="Mori H."/>
            <person name="Horiuchi T."/>
        </authorList>
    </citation>
    <scope>NUCLEOTIDE SEQUENCE [LARGE SCALE GENOMIC DNA]</scope>
    <source>
        <strain>K12 / W3110 / ATCC 27325 / DSM 5911</strain>
    </source>
</reference>
<reference key="5">
    <citation type="journal article" date="2002" name="J. Struct. Funct. Genomics">
        <title>Crystal structure of a conserved hypothetical protein from Escherichia coli.</title>
        <authorList>
            <person name="Shin D.H."/>
            <person name="Yokota H."/>
            <person name="Kim R."/>
            <person name="Kim S.-H."/>
        </authorList>
    </citation>
    <scope>X-RAY CRYSTALLOGRAPHY (2.8 ANGSTROMS)</scope>
    <scope>SUBUNIT</scope>
</reference>